<evidence type="ECO:0000255" key="1">
    <source>
        <dbReference type="HAMAP-Rule" id="MF_01309"/>
    </source>
</evidence>
<evidence type="ECO:0000305" key="2"/>
<dbReference type="EMBL" id="CP000627">
    <property type="protein sequence ID" value="ABQ19556.1"/>
    <property type="molecule type" value="Genomic_DNA"/>
</dbReference>
<dbReference type="EMBL" id="CP001235">
    <property type="protein sequence ID" value="ACP10689.1"/>
    <property type="molecule type" value="Genomic_DNA"/>
</dbReference>
<dbReference type="RefSeq" id="WP_000529940.1">
    <property type="nucleotide sequence ID" value="NZ_JAACZH010000007.1"/>
</dbReference>
<dbReference type="SMR" id="A5F543"/>
<dbReference type="GeneID" id="93953123"/>
<dbReference type="KEGG" id="vco:VC0395_A2168"/>
<dbReference type="KEGG" id="vcr:VC395_2703"/>
<dbReference type="PATRIC" id="fig|345073.21.peg.2603"/>
<dbReference type="eggNOG" id="COG0092">
    <property type="taxonomic scope" value="Bacteria"/>
</dbReference>
<dbReference type="HOGENOM" id="CLU_058591_0_2_6"/>
<dbReference type="OrthoDB" id="9806396at2"/>
<dbReference type="Proteomes" id="UP000000249">
    <property type="component" value="Chromosome 2"/>
</dbReference>
<dbReference type="GO" id="GO:0022627">
    <property type="term" value="C:cytosolic small ribosomal subunit"/>
    <property type="evidence" value="ECO:0007669"/>
    <property type="project" value="TreeGrafter"/>
</dbReference>
<dbReference type="GO" id="GO:0003729">
    <property type="term" value="F:mRNA binding"/>
    <property type="evidence" value="ECO:0007669"/>
    <property type="project" value="UniProtKB-UniRule"/>
</dbReference>
<dbReference type="GO" id="GO:0019843">
    <property type="term" value="F:rRNA binding"/>
    <property type="evidence" value="ECO:0007669"/>
    <property type="project" value="UniProtKB-UniRule"/>
</dbReference>
<dbReference type="GO" id="GO:0003735">
    <property type="term" value="F:structural constituent of ribosome"/>
    <property type="evidence" value="ECO:0007669"/>
    <property type="project" value="InterPro"/>
</dbReference>
<dbReference type="GO" id="GO:0006412">
    <property type="term" value="P:translation"/>
    <property type="evidence" value="ECO:0007669"/>
    <property type="project" value="UniProtKB-UniRule"/>
</dbReference>
<dbReference type="CDD" id="cd02412">
    <property type="entry name" value="KH-II_30S_S3"/>
    <property type="match status" value="1"/>
</dbReference>
<dbReference type="FunFam" id="3.30.1140.32:FF:000001">
    <property type="entry name" value="30S ribosomal protein S3"/>
    <property type="match status" value="1"/>
</dbReference>
<dbReference type="FunFam" id="3.30.300.20:FF:000001">
    <property type="entry name" value="30S ribosomal protein S3"/>
    <property type="match status" value="1"/>
</dbReference>
<dbReference type="Gene3D" id="3.30.300.20">
    <property type="match status" value="1"/>
</dbReference>
<dbReference type="Gene3D" id="3.30.1140.32">
    <property type="entry name" value="Ribosomal protein S3, C-terminal domain"/>
    <property type="match status" value="1"/>
</dbReference>
<dbReference type="HAMAP" id="MF_01309_B">
    <property type="entry name" value="Ribosomal_uS3_B"/>
    <property type="match status" value="1"/>
</dbReference>
<dbReference type="InterPro" id="IPR004087">
    <property type="entry name" value="KH_dom"/>
</dbReference>
<dbReference type="InterPro" id="IPR015946">
    <property type="entry name" value="KH_dom-like_a/b"/>
</dbReference>
<dbReference type="InterPro" id="IPR004044">
    <property type="entry name" value="KH_dom_type_2"/>
</dbReference>
<dbReference type="InterPro" id="IPR009019">
    <property type="entry name" value="KH_sf_prok-type"/>
</dbReference>
<dbReference type="InterPro" id="IPR036419">
    <property type="entry name" value="Ribosomal_S3_C_sf"/>
</dbReference>
<dbReference type="InterPro" id="IPR005704">
    <property type="entry name" value="Ribosomal_uS3_bac-typ"/>
</dbReference>
<dbReference type="InterPro" id="IPR001351">
    <property type="entry name" value="Ribosomal_uS3_C"/>
</dbReference>
<dbReference type="InterPro" id="IPR018280">
    <property type="entry name" value="Ribosomal_uS3_CS"/>
</dbReference>
<dbReference type="NCBIfam" id="TIGR01009">
    <property type="entry name" value="rpsC_bact"/>
    <property type="match status" value="1"/>
</dbReference>
<dbReference type="PANTHER" id="PTHR11760">
    <property type="entry name" value="30S/40S RIBOSOMAL PROTEIN S3"/>
    <property type="match status" value="1"/>
</dbReference>
<dbReference type="PANTHER" id="PTHR11760:SF19">
    <property type="entry name" value="SMALL RIBOSOMAL SUBUNIT PROTEIN US3C"/>
    <property type="match status" value="1"/>
</dbReference>
<dbReference type="Pfam" id="PF07650">
    <property type="entry name" value="KH_2"/>
    <property type="match status" value="1"/>
</dbReference>
<dbReference type="Pfam" id="PF00189">
    <property type="entry name" value="Ribosomal_S3_C"/>
    <property type="match status" value="1"/>
</dbReference>
<dbReference type="SMART" id="SM00322">
    <property type="entry name" value="KH"/>
    <property type="match status" value="1"/>
</dbReference>
<dbReference type="SUPFAM" id="SSF54814">
    <property type="entry name" value="Prokaryotic type KH domain (KH-domain type II)"/>
    <property type="match status" value="1"/>
</dbReference>
<dbReference type="SUPFAM" id="SSF54821">
    <property type="entry name" value="Ribosomal protein S3 C-terminal domain"/>
    <property type="match status" value="1"/>
</dbReference>
<dbReference type="PROSITE" id="PS50823">
    <property type="entry name" value="KH_TYPE_2"/>
    <property type="match status" value="1"/>
</dbReference>
<dbReference type="PROSITE" id="PS00548">
    <property type="entry name" value="RIBOSOMAL_S3"/>
    <property type="match status" value="1"/>
</dbReference>
<comment type="function">
    <text evidence="1">Binds the lower part of the 30S subunit head. Binds mRNA in the 70S ribosome, positioning it for translation.</text>
</comment>
<comment type="subunit">
    <text evidence="1">Part of the 30S ribosomal subunit. Forms a tight complex with proteins S10 and S14.</text>
</comment>
<comment type="similarity">
    <text evidence="1">Belongs to the universal ribosomal protein uS3 family.</text>
</comment>
<organism>
    <name type="scientific">Vibrio cholerae serotype O1 (strain ATCC 39541 / Classical Ogawa 395 / O395)</name>
    <dbReference type="NCBI Taxonomy" id="345073"/>
    <lineage>
        <taxon>Bacteria</taxon>
        <taxon>Pseudomonadati</taxon>
        <taxon>Pseudomonadota</taxon>
        <taxon>Gammaproteobacteria</taxon>
        <taxon>Vibrionales</taxon>
        <taxon>Vibrionaceae</taxon>
        <taxon>Vibrio</taxon>
    </lineage>
</organism>
<feature type="chain" id="PRO_1000086172" description="Small ribosomal subunit protein uS3">
    <location>
        <begin position="1"/>
        <end position="233"/>
    </location>
</feature>
<feature type="domain" description="KH type-2" evidence="1">
    <location>
        <begin position="39"/>
        <end position="107"/>
    </location>
</feature>
<name>RS3_VIBC3</name>
<sequence length="233" mass="25612">MGQKVHPNGIRLGIVKPWNATWFANTKDFADNLDGDFKVRQYLSKELANASLSRIVIERPAKSIRVTIHTARPGVVIGKKGEDVEKLRAAVAKIAGVPAQINIAEVRKPELDGQLVADSIASQLERRVMFRRAMKRAVQNAMRLGAKGIKVEVSGRLGGAEIARSEWYREGRVPLHTLRADIDYATSSAHTTYGVIGVKVWIFKGEILGGMPAATEAAEPKADKPKKQRKGRK</sequence>
<protein>
    <recommendedName>
        <fullName evidence="1">Small ribosomal subunit protein uS3</fullName>
    </recommendedName>
    <alternativeName>
        <fullName evidence="2">30S ribosomal protein S3</fullName>
    </alternativeName>
</protein>
<accession>A5F543</accession>
<accession>C3LXI9</accession>
<keyword id="KW-0687">Ribonucleoprotein</keyword>
<keyword id="KW-0689">Ribosomal protein</keyword>
<keyword id="KW-0694">RNA-binding</keyword>
<keyword id="KW-0699">rRNA-binding</keyword>
<gene>
    <name evidence="1" type="primary">rpsC</name>
    <name type="ordered locus">VC0395_A2168</name>
    <name type="ordered locus">VC395_2703</name>
</gene>
<reference key="1">
    <citation type="submission" date="2007-03" db="EMBL/GenBank/DDBJ databases">
        <authorList>
            <person name="Heidelberg J."/>
        </authorList>
    </citation>
    <scope>NUCLEOTIDE SEQUENCE [LARGE SCALE GENOMIC DNA]</scope>
    <source>
        <strain>ATCC 39541 / Classical Ogawa 395 / O395</strain>
    </source>
</reference>
<reference key="2">
    <citation type="journal article" date="2008" name="PLoS ONE">
        <title>A recalibrated molecular clock and independent origins for the cholera pandemic clones.</title>
        <authorList>
            <person name="Feng L."/>
            <person name="Reeves P.R."/>
            <person name="Lan R."/>
            <person name="Ren Y."/>
            <person name="Gao C."/>
            <person name="Zhou Z."/>
            <person name="Ren Y."/>
            <person name="Cheng J."/>
            <person name="Wang W."/>
            <person name="Wang J."/>
            <person name="Qian W."/>
            <person name="Li D."/>
            <person name="Wang L."/>
        </authorList>
    </citation>
    <scope>NUCLEOTIDE SEQUENCE [LARGE SCALE GENOMIC DNA]</scope>
    <source>
        <strain>ATCC 39541 / Classical Ogawa 395 / O395</strain>
    </source>
</reference>
<proteinExistence type="inferred from homology"/>